<keyword id="KW-0997">Cell inner membrane</keyword>
<keyword id="KW-1003">Cell membrane</keyword>
<keyword id="KW-0472">Membrane</keyword>
<keyword id="KW-0808">Transferase</keyword>
<keyword id="KW-0812">Transmembrane</keyword>
<keyword id="KW-1133">Transmembrane helix</keyword>
<accession>B2UUA1</accession>
<sequence>MNAWNTIYDQFNPIAFSLGSIEVHWYGLAYACAIVTAFYMALRMIQKDPKRFPIERKEFESYFLWAELGIVLGARVGYILIYEPNSSYYLTHFWQIFNPFDSNGDFVGIRGMSYHGGLVGFLIASYLYSRKDLKKLLIYLDLIAISLPLGYVFGRIGNFLNQELVGRVVPKDSHLGQIIGIMVGNELRYPSQLIEAFLEGVIVFLMVLWAKKHTKTHGLLIVVYGLGYSLMRFIAEFYREPDSQMGVYFLNLSMGQILSLLMVIVSLGILLYATKNSKKIKGNQ</sequence>
<dbReference type="EC" id="2.5.1.145" evidence="1"/>
<dbReference type="EMBL" id="CP001072">
    <property type="protein sequence ID" value="ACD48433.1"/>
    <property type="molecule type" value="Genomic_DNA"/>
</dbReference>
<dbReference type="RefSeq" id="WP_000995104.1">
    <property type="nucleotide sequence ID" value="NC_010698.2"/>
</dbReference>
<dbReference type="SMR" id="B2UUA1"/>
<dbReference type="KEGG" id="hps:HPSH_05035"/>
<dbReference type="HOGENOM" id="CLU_013386_1_0_7"/>
<dbReference type="UniPathway" id="UPA00664"/>
<dbReference type="GO" id="GO:0005886">
    <property type="term" value="C:plasma membrane"/>
    <property type="evidence" value="ECO:0007669"/>
    <property type="project" value="UniProtKB-SubCell"/>
</dbReference>
<dbReference type="GO" id="GO:0008961">
    <property type="term" value="F:phosphatidylglycerol-prolipoprotein diacylglyceryl transferase activity"/>
    <property type="evidence" value="ECO:0007669"/>
    <property type="project" value="UniProtKB-UniRule"/>
</dbReference>
<dbReference type="GO" id="GO:0042158">
    <property type="term" value="P:lipoprotein biosynthetic process"/>
    <property type="evidence" value="ECO:0007669"/>
    <property type="project" value="UniProtKB-UniRule"/>
</dbReference>
<dbReference type="HAMAP" id="MF_01147">
    <property type="entry name" value="Lgt"/>
    <property type="match status" value="1"/>
</dbReference>
<dbReference type="InterPro" id="IPR001640">
    <property type="entry name" value="Lgt"/>
</dbReference>
<dbReference type="NCBIfam" id="TIGR00544">
    <property type="entry name" value="lgt"/>
    <property type="match status" value="1"/>
</dbReference>
<dbReference type="PANTHER" id="PTHR30589:SF0">
    <property type="entry name" value="PHOSPHATIDYLGLYCEROL--PROLIPOPROTEIN DIACYLGLYCERYL TRANSFERASE"/>
    <property type="match status" value="1"/>
</dbReference>
<dbReference type="PANTHER" id="PTHR30589">
    <property type="entry name" value="PROLIPOPROTEIN DIACYLGLYCERYL TRANSFERASE"/>
    <property type="match status" value="1"/>
</dbReference>
<dbReference type="Pfam" id="PF01790">
    <property type="entry name" value="LGT"/>
    <property type="match status" value="1"/>
</dbReference>
<dbReference type="PROSITE" id="PS01311">
    <property type="entry name" value="LGT"/>
    <property type="match status" value="1"/>
</dbReference>
<organism>
    <name type="scientific">Helicobacter pylori (strain Shi470)</name>
    <dbReference type="NCBI Taxonomy" id="512562"/>
    <lineage>
        <taxon>Bacteria</taxon>
        <taxon>Pseudomonadati</taxon>
        <taxon>Campylobacterota</taxon>
        <taxon>Epsilonproteobacteria</taxon>
        <taxon>Campylobacterales</taxon>
        <taxon>Helicobacteraceae</taxon>
        <taxon>Helicobacter</taxon>
    </lineage>
</organism>
<comment type="function">
    <text evidence="1">Catalyzes the transfer of the diacylglyceryl group from phosphatidylglycerol to the sulfhydryl group of the N-terminal cysteine of a prolipoprotein, the first step in the formation of mature lipoproteins.</text>
</comment>
<comment type="catalytic activity">
    <reaction evidence="1">
        <text>L-cysteinyl-[prolipoprotein] + a 1,2-diacyl-sn-glycero-3-phospho-(1'-sn-glycerol) = an S-1,2-diacyl-sn-glyceryl-L-cysteinyl-[prolipoprotein] + sn-glycerol 1-phosphate + H(+)</text>
        <dbReference type="Rhea" id="RHEA:56712"/>
        <dbReference type="Rhea" id="RHEA-COMP:14679"/>
        <dbReference type="Rhea" id="RHEA-COMP:14680"/>
        <dbReference type="ChEBI" id="CHEBI:15378"/>
        <dbReference type="ChEBI" id="CHEBI:29950"/>
        <dbReference type="ChEBI" id="CHEBI:57685"/>
        <dbReference type="ChEBI" id="CHEBI:64716"/>
        <dbReference type="ChEBI" id="CHEBI:140658"/>
        <dbReference type="EC" id="2.5.1.145"/>
    </reaction>
</comment>
<comment type="pathway">
    <text evidence="1">Protein modification; lipoprotein biosynthesis (diacylglyceryl transfer).</text>
</comment>
<comment type="subcellular location">
    <subcellularLocation>
        <location evidence="1">Cell inner membrane</location>
        <topology evidence="1">Multi-pass membrane protein</topology>
    </subcellularLocation>
</comment>
<comment type="similarity">
    <text evidence="1">Belongs to the Lgt family.</text>
</comment>
<evidence type="ECO:0000255" key="1">
    <source>
        <dbReference type="HAMAP-Rule" id="MF_01147"/>
    </source>
</evidence>
<reference key="1">
    <citation type="submission" date="2008-05" db="EMBL/GenBank/DDBJ databases">
        <title>Genome sequence of Helicobacter pylori from the remote Amazon: traces of Asian ancestry of the first Americans.</title>
        <authorList>
            <person name="Kersulyte D."/>
            <person name="Kalia A."/>
            <person name="Gilman R.H."/>
            <person name="Berg D.E."/>
        </authorList>
    </citation>
    <scope>NUCLEOTIDE SEQUENCE [LARGE SCALE GENOMIC DNA]</scope>
    <source>
        <strain>Shi470</strain>
    </source>
</reference>
<protein>
    <recommendedName>
        <fullName evidence="1">Phosphatidylglycerol--prolipoprotein diacylglyceryl transferase</fullName>
        <ecNumber evidence="1">2.5.1.145</ecNumber>
    </recommendedName>
</protein>
<gene>
    <name evidence="1" type="primary">lgt</name>
    <name type="ordered locus">HPSH_05035</name>
</gene>
<proteinExistence type="inferred from homology"/>
<name>LGT_HELPS</name>
<feature type="chain" id="PRO_1000137434" description="Phosphatidylglycerol--prolipoprotein diacylglyceryl transferase">
    <location>
        <begin position="1"/>
        <end position="284"/>
    </location>
</feature>
<feature type="transmembrane region" description="Helical" evidence="1">
    <location>
        <begin position="14"/>
        <end position="34"/>
    </location>
</feature>
<feature type="transmembrane region" description="Helical" evidence="1">
    <location>
        <begin position="62"/>
        <end position="82"/>
    </location>
</feature>
<feature type="transmembrane region" description="Helical" evidence="1">
    <location>
        <begin position="106"/>
        <end position="126"/>
    </location>
</feature>
<feature type="transmembrane region" description="Helical" evidence="1">
    <location>
        <begin position="136"/>
        <end position="156"/>
    </location>
</feature>
<feature type="transmembrane region" description="Helical" evidence="1">
    <location>
        <begin position="190"/>
        <end position="210"/>
    </location>
</feature>
<feature type="transmembrane region" description="Helical" evidence="1">
    <location>
        <begin position="218"/>
        <end position="238"/>
    </location>
</feature>
<feature type="transmembrane region" description="Helical" evidence="1">
    <location>
        <begin position="252"/>
        <end position="272"/>
    </location>
</feature>
<feature type="binding site" evidence="1">
    <location>
        <position position="155"/>
    </location>
    <ligand>
        <name>a 1,2-diacyl-sn-glycero-3-phospho-(1'-sn-glycerol)</name>
        <dbReference type="ChEBI" id="CHEBI:64716"/>
    </ligand>
</feature>